<accession>Q8VCX2</accession>
<sequence>MGRWALDVAFVWKAALTLGLVLLYYCFSIGITFYNKWLTKSFHFPLFMTMLHLAVIFLFSALSRALVQCSSHKARVVLSWTDYLRRVAPTALATALDVGLSNWSFLYITVSLYTMTKSSAVLFILIFSLIFKLEELRAALVLVVLLIAGGLFMFTYKSTQFNVEGFALVLGASFIGGIRWTLTQILLQKADLGLQNPIDTMFHLQPLMFLGLFPLFAIFEGLHLSTSEKIFRFQDTGLLLWVLGSLLLGGILAFGLGFSEFLLVSRTSSLTLSIAGIFKEVCTLLLAAHLLGDQISLLNWLGFALCLSGISLHVALKALHSRGDGGPKPLKSLGSSADLELLLRSSQQEEEDGEEEYFVTQGQQ</sequence>
<reference key="1">
    <citation type="journal article" date="2004" name="Genome Res.">
        <title>The status, quality, and expansion of the NIH full-length cDNA project: the Mammalian Gene Collection (MGC).</title>
        <authorList>
            <consortium name="The MGC Project Team"/>
        </authorList>
    </citation>
    <scope>NUCLEOTIDE SEQUENCE [LARGE SCALE MRNA]</scope>
    <source>
        <tissue>Salivary gland</tissue>
    </source>
</reference>
<reference key="2">
    <citation type="journal article" date="2002" name="Mamm. Genome">
        <title>Identification, molecular characterization, and tissue expression of OVCOV1.</title>
        <authorList>
            <person name="Leach R.E."/>
            <person name="Duniec-Dmuchowski Z.M."/>
            <person name="Pesole G."/>
            <person name="Tanaka T.S."/>
            <person name="Ko M.S.H."/>
            <person name="Armant D.R."/>
            <person name="Krawetz S.A."/>
        </authorList>
    </citation>
    <scope>DEVELOPMENTAL STAGE</scope>
</reference>
<reference key="3">
    <citation type="journal article" date="2009" name="Immunity">
        <title>The phagosomal proteome in interferon-gamma-activated macrophages.</title>
        <authorList>
            <person name="Trost M."/>
            <person name="English L."/>
            <person name="Lemieux S."/>
            <person name="Courcelles M."/>
            <person name="Desjardins M."/>
            <person name="Thibault P."/>
        </authorList>
    </citation>
    <scope>PHOSPHORYLATION [LARGE SCALE ANALYSIS] AT SER-335</scope>
    <scope>IDENTIFICATION BY MASS SPECTROMETRY [LARGE SCALE ANALYSIS]</scope>
</reference>
<reference key="4">
    <citation type="journal article" date="2010" name="Cell">
        <title>A tissue-specific atlas of mouse protein phosphorylation and expression.</title>
        <authorList>
            <person name="Huttlin E.L."/>
            <person name="Jedrychowski M.P."/>
            <person name="Elias J.E."/>
            <person name="Goswami T."/>
            <person name="Rad R."/>
            <person name="Beausoleil S.A."/>
            <person name="Villen J."/>
            <person name="Haas W."/>
            <person name="Sowa M.E."/>
            <person name="Gygi S.P."/>
        </authorList>
    </citation>
    <scope>PHOSPHORYLATION [LARGE SCALE ANALYSIS] AT SER-335</scope>
    <scope>IDENTIFICATION BY MASS SPECTROMETRY [LARGE SCALE ANALYSIS]</scope>
    <source>
        <tissue>Brown adipose tissue</tissue>
        <tissue>Heart</tissue>
        <tissue>Kidney</tissue>
        <tissue>Lung</tissue>
        <tissue>Pancreas</tissue>
        <tissue>Spleen</tissue>
        <tissue>Testis</tissue>
    </source>
</reference>
<dbReference type="EMBL" id="BC018327">
    <property type="protein sequence ID" value="AAH18327.1"/>
    <property type="molecule type" value="mRNA"/>
</dbReference>
<dbReference type="CCDS" id="CCDS17074.1"/>
<dbReference type="RefSeq" id="NP_001239502.1">
    <property type="nucleotide sequence ID" value="NM_001252573.1"/>
</dbReference>
<dbReference type="RefSeq" id="NP_001239503.1">
    <property type="nucleotide sequence ID" value="NM_001252574.1"/>
</dbReference>
<dbReference type="RefSeq" id="NP_001349944.1">
    <property type="nucleotide sequence ID" value="NM_001363015.1"/>
</dbReference>
<dbReference type="RefSeq" id="NP_001349945.1">
    <property type="nucleotide sequence ID" value="NM_001363016.1"/>
</dbReference>
<dbReference type="RefSeq" id="NP_659142.1">
    <property type="nucleotide sequence ID" value="NM_144893.2"/>
</dbReference>
<dbReference type="RefSeq" id="XP_006499433.1">
    <property type="nucleotide sequence ID" value="XM_006499370.3"/>
</dbReference>
<dbReference type="RefSeq" id="XP_006499434.1">
    <property type="nucleotide sequence ID" value="XM_006499371.4"/>
</dbReference>
<dbReference type="RefSeq" id="XP_006499435.1">
    <property type="nucleotide sequence ID" value="XM_006499372.5"/>
</dbReference>
<dbReference type="RefSeq" id="XP_006499438.1">
    <property type="nucleotide sequence ID" value="XM_006499375.5"/>
</dbReference>
<dbReference type="RefSeq" id="XP_030106527.1">
    <property type="nucleotide sequence ID" value="XM_030250667.2"/>
</dbReference>
<dbReference type="RefSeq" id="XP_030106531.1">
    <property type="nucleotide sequence ID" value="XM_030250671.2"/>
</dbReference>
<dbReference type="RefSeq" id="XP_030106532.1">
    <property type="nucleotide sequence ID" value="XM_030250672.2"/>
</dbReference>
<dbReference type="RefSeq" id="XP_030106533.1">
    <property type="nucleotide sequence ID" value="XM_030250673.2"/>
</dbReference>
<dbReference type="RefSeq" id="XP_036017525.1">
    <property type="nucleotide sequence ID" value="XM_036161632.1"/>
</dbReference>
<dbReference type="SMR" id="Q8VCX2"/>
<dbReference type="FunCoup" id="Q8VCX2">
    <property type="interactions" value="3209"/>
</dbReference>
<dbReference type="STRING" id="10090.ENSMUSP00000104923"/>
<dbReference type="TCDB" id="2.A.7.9.8">
    <property type="family name" value="the drug/metabolite transporter (dmt) superfamily"/>
</dbReference>
<dbReference type="GlyCosmos" id="Q8VCX2">
    <property type="glycosylation" value="1 site, No reported glycans"/>
</dbReference>
<dbReference type="GlyGen" id="Q8VCX2">
    <property type="glycosylation" value="1 site"/>
</dbReference>
<dbReference type="iPTMnet" id="Q8VCX2"/>
<dbReference type="PhosphoSitePlus" id="Q8VCX2"/>
<dbReference type="jPOST" id="Q8VCX2"/>
<dbReference type="PaxDb" id="10090-ENSMUSP00000104923"/>
<dbReference type="ProteomicsDB" id="256885"/>
<dbReference type="Antibodypedia" id="53835">
    <property type="antibodies" value="44 antibodies from 13 providers"/>
</dbReference>
<dbReference type="DNASU" id="228875"/>
<dbReference type="Ensembl" id="ENSMUST00000017808.14">
    <property type="protein sequence ID" value="ENSMUSP00000017808.8"/>
    <property type="gene ID" value="ENSMUSG00000017664.17"/>
</dbReference>
<dbReference type="Ensembl" id="ENSMUST00000109298.8">
    <property type="protein sequence ID" value="ENSMUSP00000104921.2"/>
    <property type="gene ID" value="ENSMUSG00000017664.17"/>
</dbReference>
<dbReference type="Ensembl" id="ENSMUST00000109299.8">
    <property type="protein sequence ID" value="ENSMUSP00000104922.2"/>
    <property type="gene ID" value="ENSMUSG00000017664.17"/>
</dbReference>
<dbReference type="Ensembl" id="ENSMUST00000109300.9">
    <property type="protein sequence ID" value="ENSMUSP00000104923.3"/>
    <property type="gene ID" value="ENSMUSG00000017664.17"/>
</dbReference>
<dbReference type="GeneID" id="228875"/>
<dbReference type="KEGG" id="mmu:228875"/>
<dbReference type="UCSC" id="uc008nxd.2">
    <property type="organism name" value="mouse"/>
</dbReference>
<dbReference type="AGR" id="MGI:2385166"/>
<dbReference type="CTD" id="51006"/>
<dbReference type="MGI" id="MGI:2385166">
    <property type="gene designation" value="Slc35c2"/>
</dbReference>
<dbReference type="VEuPathDB" id="HostDB:ENSMUSG00000017664"/>
<dbReference type="eggNOG" id="KOG1443">
    <property type="taxonomic scope" value="Eukaryota"/>
</dbReference>
<dbReference type="GeneTree" id="ENSGT00510000048078"/>
<dbReference type="HOGENOM" id="CLU_022332_1_3_1"/>
<dbReference type="InParanoid" id="Q8VCX2"/>
<dbReference type="OMA" id="LFWEVPK"/>
<dbReference type="OrthoDB" id="18894at2759"/>
<dbReference type="PhylomeDB" id="Q8VCX2"/>
<dbReference type="TreeFam" id="TF314994"/>
<dbReference type="BioGRID-ORCS" id="228875">
    <property type="hits" value="4 hits in 76 CRISPR screens"/>
</dbReference>
<dbReference type="ChiTaRS" id="Slc35c2">
    <property type="organism name" value="mouse"/>
</dbReference>
<dbReference type="PRO" id="PR:Q8VCX2"/>
<dbReference type="Proteomes" id="UP000000589">
    <property type="component" value="Chromosome 2"/>
</dbReference>
<dbReference type="RNAct" id="Q8VCX2">
    <property type="molecule type" value="protein"/>
</dbReference>
<dbReference type="Bgee" id="ENSMUSG00000017664">
    <property type="expression patterns" value="Expressed in lacrimal gland and 260 other cell types or tissues"/>
</dbReference>
<dbReference type="ExpressionAtlas" id="Q8VCX2">
    <property type="expression patterns" value="baseline and differential"/>
</dbReference>
<dbReference type="GO" id="GO:0005801">
    <property type="term" value="C:cis-Golgi network"/>
    <property type="evidence" value="ECO:0000266"/>
    <property type="project" value="MGI"/>
</dbReference>
<dbReference type="GO" id="GO:0005793">
    <property type="term" value="C:endoplasmic reticulum-Golgi intermediate compartment"/>
    <property type="evidence" value="ECO:0000266"/>
    <property type="project" value="MGI"/>
</dbReference>
<dbReference type="GO" id="GO:0033116">
    <property type="term" value="C:endoplasmic reticulum-Golgi intermediate compartment membrane"/>
    <property type="evidence" value="ECO:0007669"/>
    <property type="project" value="UniProtKB-SubCell"/>
</dbReference>
<dbReference type="GO" id="GO:0005654">
    <property type="term" value="C:nucleoplasm"/>
    <property type="evidence" value="ECO:0007669"/>
    <property type="project" value="Ensembl"/>
</dbReference>
<dbReference type="GO" id="GO:0036065">
    <property type="term" value="P:fucosylation"/>
    <property type="evidence" value="ECO:0000314"/>
    <property type="project" value="MGI"/>
</dbReference>
<dbReference type="GO" id="GO:0010629">
    <property type="term" value="P:negative regulation of gene expression"/>
    <property type="evidence" value="ECO:0000314"/>
    <property type="project" value="MGI"/>
</dbReference>
<dbReference type="GO" id="GO:0045747">
    <property type="term" value="P:positive regulation of Notch signaling pathway"/>
    <property type="evidence" value="ECO:0000314"/>
    <property type="project" value="MGI"/>
</dbReference>
<dbReference type="GO" id="GO:0036066">
    <property type="term" value="P:protein O-linked fucosylation"/>
    <property type="evidence" value="ECO:0000314"/>
    <property type="project" value="MGI"/>
</dbReference>
<dbReference type="CDD" id="cd21092">
    <property type="entry name" value="TPT_S35C2"/>
    <property type="match status" value="1"/>
</dbReference>
<dbReference type="InterPro" id="IPR004853">
    <property type="entry name" value="Sugar_P_trans_dom"/>
</dbReference>
<dbReference type="InterPro" id="IPR050186">
    <property type="entry name" value="TPT_transporter"/>
</dbReference>
<dbReference type="PANTHER" id="PTHR11132">
    <property type="entry name" value="SOLUTE CARRIER FAMILY 35"/>
    <property type="match status" value="1"/>
</dbReference>
<dbReference type="Pfam" id="PF03151">
    <property type="entry name" value="TPT"/>
    <property type="match status" value="1"/>
</dbReference>
<comment type="function">
    <text evidence="1">May play an important role in the cellular response to tissue hypoxia. May be either a GDP-fucose transporter that competes with SLC35C1 for GDP-fucose, or a factor that otherwise enhances the fucosylation of Notch and is required for optimal Notch signaling in mammalian cells (By similarity).</text>
</comment>
<comment type="subcellular location">
    <subcellularLocation>
        <location evidence="2">Golgi apparatus</location>
        <location evidence="2">cis-Golgi network membrane</location>
        <topology evidence="3">Multi-pass membrane protein</topology>
    </subcellularLocation>
    <subcellularLocation>
        <location evidence="2">Endoplasmic reticulum-Golgi intermediate compartment membrane</location>
        <topology evidence="3">Multi-pass membrane protein</topology>
    </subcellularLocation>
</comment>
<comment type="developmental stage">
    <text evidence="4">Higher expression at embryo stage 7.5 dpc than 11-17 dpc.</text>
</comment>
<comment type="similarity">
    <text evidence="5">Belongs to the TPT transporter family. SLC35C subfamily.</text>
</comment>
<keyword id="KW-0325">Glycoprotein</keyword>
<keyword id="KW-0333">Golgi apparatus</keyword>
<keyword id="KW-0472">Membrane</keyword>
<keyword id="KW-0597">Phosphoprotein</keyword>
<keyword id="KW-1185">Reference proteome</keyword>
<keyword id="KW-0812">Transmembrane</keyword>
<keyword id="KW-1133">Transmembrane helix</keyword>
<keyword id="KW-0813">Transport</keyword>
<feature type="chain" id="PRO_0000213400" description="Solute carrier family 35 member C2">
    <location>
        <begin position="1"/>
        <end position="364"/>
    </location>
</feature>
<feature type="transmembrane region" description="Helical" evidence="3">
    <location>
        <begin position="14"/>
        <end position="34"/>
    </location>
</feature>
<feature type="transmembrane region" description="Helical" evidence="3">
    <location>
        <begin position="42"/>
        <end position="62"/>
    </location>
</feature>
<feature type="transmembrane region" description="Helical" evidence="3">
    <location>
        <begin position="104"/>
        <end position="124"/>
    </location>
</feature>
<feature type="transmembrane region" description="Helical" evidence="3">
    <location>
        <begin position="136"/>
        <end position="156"/>
    </location>
</feature>
<feature type="transmembrane region" description="Helical" evidence="3">
    <location>
        <begin position="166"/>
        <end position="186"/>
    </location>
</feature>
<feature type="transmembrane region" description="Helical" evidence="3">
    <location>
        <begin position="202"/>
        <end position="222"/>
    </location>
</feature>
<feature type="transmembrane region" description="Helical" evidence="3">
    <location>
        <begin position="238"/>
        <end position="258"/>
    </location>
</feature>
<feature type="transmembrane region" description="Helical" evidence="3">
    <location>
        <begin position="272"/>
        <end position="292"/>
    </location>
</feature>
<feature type="transmembrane region" description="Helical" evidence="3">
    <location>
        <begin position="295"/>
        <end position="315"/>
    </location>
</feature>
<feature type="modified residue" description="Phosphoserine" evidence="6 7">
    <location>
        <position position="335"/>
    </location>
</feature>
<feature type="modified residue" description="Phosphoserine" evidence="2">
    <location>
        <position position="336"/>
    </location>
</feature>
<feature type="glycosylation site" description="N-linked (GlcNAc...) asparagine" evidence="3">
    <location>
        <position position="102"/>
    </location>
</feature>
<organism>
    <name type="scientific">Mus musculus</name>
    <name type="common">Mouse</name>
    <dbReference type="NCBI Taxonomy" id="10090"/>
    <lineage>
        <taxon>Eukaryota</taxon>
        <taxon>Metazoa</taxon>
        <taxon>Chordata</taxon>
        <taxon>Craniata</taxon>
        <taxon>Vertebrata</taxon>
        <taxon>Euteleostomi</taxon>
        <taxon>Mammalia</taxon>
        <taxon>Eutheria</taxon>
        <taxon>Euarchontoglires</taxon>
        <taxon>Glires</taxon>
        <taxon>Rodentia</taxon>
        <taxon>Myomorpha</taxon>
        <taxon>Muroidea</taxon>
        <taxon>Muridae</taxon>
        <taxon>Murinae</taxon>
        <taxon>Mus</taxon>
        <taxon>Mus</taxon>
    </lineage>
</organism>
<gene>
    <name type="primary">Slc35c2</name>
    <name type="synonym">Ovcov1</name>
</gene>
<proteinExistence type="evidence at protein level"/>
<protein>
    <recommendedName>
        <fullName>Solute carrier family 35 member C2</fullName>
    </recommendedName>
    <alternativeName>
        <fullName>Ovarian cancer-overexpressed gene 1 protein</fullName>
    </alternativeName>
</protein>
<name>S35C2_MOUSE</name>
<evidence type="ECO:0000250" key="1"/>
<evidence type="ECO:0000250" key="2">
    <source>
        <dbReference type="UniProtKB" id="Q9NQQ7"/>
    </source>
</evidence>
<evidence type="ECO:0000255" key="3"/>
<evidence type="ECO:0000269" key="4">
    <source>
    </source>
</evidence>
<evidence type="ECO:0000305" key="5"/>
<evidence type="ECO:0007744" key="6">
    <source>
    </source>
</evidence>
<evidence type="ECO:0007744" key="7">
    <source>
    </source>
</evidence>